<sequence length="613" mass="68887">MPNQFETQFDIDAFLKHLTERPGVYLMYDASGQIIYVGKAKNLKRRVSSYFKKRHEEIKTETLVSQVASIEVTVTDTESEALILENTLIKRHKPRYNILFRDDKSYPYIFVSTGKKFPSLSYHRGAKRKVGRYFGPFPNASAVHQTLHALQKIFPVRQCTESVFNHRSRPCLQYQIKRCSGPCVEGLVTEAEYNEDVQHTIAFLEGKSFDVIESLGHKMQQASDEFEFEKAALYRDKISALRAIQSQHLINQPGSKDTDVVALAEEANQVCVSIMMYRGGNLWGSQNYFPKIGGQSINPGEIISAFITQHYIDLPIPQMILVSDVLEDKSSLETWLSEQKKAKVSIRKAVSQTHKGLMKLALTNAQSGLKQQLTQKASQAERVKSLQDVLALASPPNHMECFDISHTQGNQTVASCVVFNEGVPNTSAYRKFNIEGIQPGDDYAAMHQAITRRYSRVKKEGLPLPDLIVIDGGKGQLNKAIDVFKTLELDNLPLVSVAKGEGRKAGLEILYTPFNEEGIDLEADDIALHLLNYIRDEAHRFAITSHRSRRQKAQTHSRLEDIPGVGAKTRHKLLTHFGGLTEVKNAAVSELQKVPGISARIAQTIYDFFHGEI</sequence>
<protein>
    <recommendedName>
        <fullName evidence="1">UvrABC system protein C</fullName>
        <shortName evidence="1">Protein UvrC</shortName>
    </recommendedName>
    <alternativeName>
        <fullName evidence="1">Excinuclease ABC subunit C</fullName>
    </alternativeName>
</protein>
<dbReference type="EMBL" id="CP000109">
    <property type="protein sequence ID" value="ABB41740.1"/>
    <property type="molecule type" value="Genomic_DNA"/>
</dbReference>
<dbReference type="SMR" id="Q31GI3"/>
<dbReference type="STRING" id="317025.Tcr_1145"/>
<dbReference type="KEGG" id="tcx:Tcr_1145"/>
<dbReference type="eggNOG" id="COG0322">
    <property type="taxonomic scope" value="Bacteria"/>
</dbReference>
<dbReference type="HOGENOM" id="CLU_014841_3_0_6"/>
<dbReference type="OrthoDB" id="9804933at2"/>
<dbReference type="GO" id="GO:0005737">
    <property type="term" value="C:cytoplasm"/>
    <property type="evidence" value="ECO:0007669"/>
    <property type="project" value="UniProtKB-SubCell"/>
</dbReference>
<dbReference type="GO" id="GO:0009380">
    <property type="term" value="C:excinuclease repair complex"/>
    <property type="evidence" value="ECO:0007669"/>
    <property type="project" value="InterPro"/>
</dbReference>
<dbReference type="GO" id="GO:0003677">
    <property type="term" value="F:DNA binding"/>
    <property type="evidence" value="ECO:0007669"/>
    <property type="project" value="UniProtKB-UniRule"/>
</dbReference>
<dbReference type="GO" id="GO:0009381">
    <property type="term" value="F:excinuclease ABC activity"/>
    <property type="evidence" value="ECO:0007669"/>
    <property type="project" value="UniProtKB-UniRule"/>
</dbReference>
<dbReference type="GO" id="GO:0006289">
    <property type="term" value="P:nucleotide-excision repair"/>
    <property type="evidence" value="ECO:0007669"/>
    <property type="project" value="UniProtKB-UniRule"/>
</dbReference>
<dbReference type="GO" id="GO:0009432">
    <property type="term" value="P:SOS response"/>
    <property type="evidence" value="ECO:0007669"/>
    <property type="project" value="UniProtKB-UniRule"/>
</dbReference>
<dbReference type="CDD" id="cd10434">
    <property type="entry name" value="GIY-YIG_UvrC_Cho"/>
    <property type="match status" value="1"/>
</dbReference>
<dbReference type="FunFam" id="3.30.420.340:FF:000001">
    <property type="entry name" value="UvrABC system protein C"/>
    <property type="match status" value="1"/>
</dbReference>
<dbReference type="FunFam" id="3.40.1440.10:FF:000001">
    <property type="entry name" value="UvrABC system protein C"/>
    <property type="match status" value="1"/>
</dbReference>
<dbReference type="Gene3D" id="1.10.150.20">
    <property type="entry name" value="5' to 3' exonuclease, C-terminal subdomain"/>
    <property type="match status" value="1"/>
</dbReference>
<dbReference type="Gene3D" id="3.40.1440.10">
    <property type="entry name" value="GIY-YIG endonuclease"/>
    <property type="match status" value="1"/>
</dbReference>
<dbReference type="Gene3D" id="4.10.860.10">
    <property type="entry name" value="UVR domain"/>
    <property type="match status" value="1"/>
</dbReference>
<dbReference type="Gene3D" id="3.30.420.340">
    <property type="entry name" value="UvrC, RNAse H endonuclease domain"/>
    <property type="match status" value="1"/>
</dbReference>
<dbReference type="HAMAP" id="MF_00203">
    <property type="entry name" value="UvrC"/>
    <property type="match status" value="1"/>
</dbReference>
<dbReference type="InterPro" id="IPR000305">
    <property type="entry name" value="GIY-YIG_endonuc"/>
</dbReference>
<dbReference type="InterPro" id="IPR035901">
    <property type="entry name" value="GIY-YIG_endonuc_sf"/>
</dbReference>
<dbReference type="InterPro" id="IPR047296">
    <property type="entry name" value="GIY-YIG_UvrC_Cho"/>
</dbReference>
<dbReference type="InterPro" id="IPR003583">
    <property type="entry name" value="Hlx-hairpin-Hlx_DNA-bd_motif"/>
</dbReference>
<dbReference type="InterPro" id="IPR010994">
    <property type="entry name" value="RuvA_2-like"/>
</dbReference>
<dbReference type="InterPro" id="IPR001943">
    <property type="entry name" value="UVR_dom"/>
</dbReference>
<dbReference type="InterPro" id="IPR036876">
    <property type="entry name" value="UVR_dom_sf"/>
</dbReference>
<dbReference type="InterPro" id="IPR050066">
    <property type="entry name" value="UvrABC_protein_C"/>
</dbReference>
<dbReference type="InterPro" id="IPR004791">
    <property type="entry name" value="UvrC"/>
</dbReference>
<dbReference type="InterPro" id="IPR001162">
    <property type="entry name" value="UvrC_RNase_H_dom"/>
</dbReference>
<dbReference type="InterPro" id="IPR038476">
    <property type="entry name" value="UvrC_RNase_H_dom_sf"/>
</dbReference>
<dbReference type="NCBIfam" id="NF001824">
    <property type="entry name" value="PRK00558.1-5"/>
    <property type="match status" value="1"/>
</dbReference>
<dbReference type="NCBIfam" id="TIGR00194">
    <property type="entry name" value="uvrC"/>
    <property type="match status" value="1"/>
</dbReference>
<dbReference type="PANTHER" id="PTHR30562:SF1">
    <property type="entry name" value="UVRABC SYSTEM PROTEIN C"/>
    <property type="match status" value="1"/>
</dbReference>
<dbReference type="PANTHER" id="PTHR30562">
    <property type="entry name" value="UVRC/OXIDOREDUCTASE"/>
    <property type="match status" value="1"/>
</dbReference>
<dbReference type="Pfam" id="PF01541">
    <property type="entry name" value="GIY-YIG"/>
    <property type="match status" value="1"/>
</dbReference>
<dbReference type="Pfam" id="PF14520">
    <property type="entry name" value="HHH_5"/>
    <property type="match status" value="1"/>
</dbReference>
<dbReference type="Pfam" id="PF02151">
    <property type="entry name" value="UVR"/>
    <property type="match status" value="1"/>
</dbReference>
<dbReference type="Pfam" id="PF22920">
    <property type="entry name" value="UvrC_RNaseH"/>
    <property type="match status" value="1"/>
</dbReference>
<dbReference type="Pfam" id="PF08459">
    <property type="entry name" value="UvrC_RNaseH_dom"/>
    <property type="match status" value="1"/>
</dbReference>
<dbReference type="SMART" id="SM00465">
    <property type="entry name" value="GIYc"/>
    <property type="match status" value="1"/>
</dbReference>
<dbReference type="SMART" id="SM00278">
    <property type="entry name" value="HhH1"/>
    <property type="match status" value="2"/>
</dbReference>
<dbReference type="SUPFAM" id="SSF46600">
    <property type="entry name" value="C-terminal UvrC-binding domain of UvrB"/>
    <property type="match status" value="1"/>
</dbReference>
<dbReference type="SUPFAM" id="SSF82771">
    <property type="entry name" value="GIY-YIG endonuclease"/>
    <property type="match status" value="1"/>
</dbReference>
<dbReference type="SUPFAM" id="SSF47781">
    <property type="entry name" value="RuvA domain 2-like"/>
    <property type="match status" value="1"/>
</dbReference>
<dbReference type="PROSITE" id="PS50164">
    <property type="entry name" value="GIY_YIG"/>
    <property type="match status" value="1"/>
</dbReference>
<dbReference type="PROSITE" id="PS50151">
    <property type="entry name" value="UVR"/>
    <property type="match status" value="1"/>
</dbReference>
<dbReference type="PROSITE" id="PS50165">
    <property type="entry name" value="UVRC"/>
    <property type="match status" value="1"/>
</dbReference>
<accession>Q31GI3</accession>
<reference key="1">
    <citation type="journal article" date="2006" name="PLoS Biol.">
        <title>The genome of deep-sea vent chemolithoautotroph Thiomicrospira crunogena XCL-2.</title>
        <authorList>
            <person name="Scott K.M."/>
            <person name="Sievert S.M."/>
            <person name="Abril F.N."/>
            <person name="Ball L.A."/>
            <person name="Barrett C.J."/>
            <person name="Blake R.A."/>
            <person name="Boller A.J."/>
            <person name="Chain P.S.G."/>
            <person name="Clark J.A."/>
            <person name="Davis C.R."/>
            <person name="Detter C."/>
            <person name="Do K.F."/>
            <person name="Dobrinski K.P."/>
            <person name="Faza B.I."/>
            <person name="Fitzpatrick K.A."/>
            <person name="Freyermuth S.K."/>
            <person name="Harmer T.L."/>
            <person name="Hauser L.J."/>
            <person name="Huegler M."/>
            <person name="Kerfeld C.A."/>
            <person name="Klotz M.G."/>
            <person name="Kong W.W."/>
            <person name="Land M."/>
            <person name="Lapidus A."/>
            <person name="Larimer F.W."/>
            <person name="Longo D.L."/>
            <person name="Lucas S."/>
            <person name="Malfatti S.A."/>
            <person name="Massey S.E."/>
            <person name="Martin D.D."/>
            <person name="McCuddin Z."/>
            <person name="Meyer F."/>
            <person name="Moore J.L."/>
            <person name="Ocampo L.H. Jr."/>
            <person name="Paul J.H."/>
            <person name="Paulsen I.T."/>
            <person name="Reep D.K."/>
            <person name="Ren Q."/>
            <person name="Ross R.L."/>
            <person name="Sato P.Y."/>
            <person name="Thomas P."/>
            <person name="Tinkham L.E."/>
            <person name="Zeruth G.T."/>
        </authorList>
    </citation>
    <scope>NUCLEOTIDE SEQUENCE [LARGE SCALE GENOMIC DNA]</scope>
    <source>
        <strain>DSM 25203 / XCL-2</strain>
    </source>
</reference>
<proteinExistence type="inferred from homology"/>
<feature type="chain" id="PRO_0000264972" description="UvrABC system protein C">
    <location>
        <begin position="1"/>
        <end position="613"/>
    </location>
</feature>
<feature type="domain" description="GIY-YIG" evidence="1">
    <location>
        <begin position="20"/>
        <end position="98"/>
    </location>
</feature>
<feature type="domain" description="UVR" evidence="1">
    <location>
        <begin position="209"/>
        <end position="244"/>
    </location>
</feature>
<evidence type="ECO:0000255" key="1">
    <source>
        <dbReference type="HAMAP-Rule" id="MF_00203"/>
    </source>
</evidence>
<keyword id="KW-0963">Cytoplasm</keyword>
<keyword id="KW-0227">DNA damage</keyword>
<keyword id="KW-0228">DNA excision</keyword>
<keyword id="KW-0234">DNA repair</keyword>
<keyword id="KW-0267">Excision nuclease</keyword>
<keyword id="KW-0742">SOS response</keyword>
<organism>
    <name type="scientific">Hydrogenovibrio crunogenus (strain DSM 25203 / XCL-2)</name>
    <name type="common">Thiomicrospira crunogena</name>
    <dbReference type="NCBI Taxonomy" id="317025"/>
    <lineage>
        <taxon>Bacteria</taxon>
        <taxon>Pseudomonadati</taxon>
        <taxon>Pseudomonadota</taxon>
        <taxon>Gammaproteobacteria</taxon>
        <taxon>Thiotrichales</taxon>
        <taxon>Piscirickettsiaceae</taxon>
        <taxon>Hydrogenovibrio</taxon>
    </lineage>
</organism>
<comment type="function">
    <text evidence="1">The UvrABC repair system catalyzes the recognition and processing of DNA lesions. UvrC both incises the 5' and 3' sides of the lesion. The N-terminal half is responsible for the 3' incision and the C-terminal half is responsible for the 5' incision.</text>
</comment>
<comment type="subunit">
    <text evidence="1">Interacts with UvrB in an incision complex.</text>
</comment>
<comment type="subcellular location">
    <subcellularLocation>
        <location evidence="1">Cytoplasm</location>
    </subcellularLocation>
</comment>
<comment type="similarity">
    <text evidence="1">Belongs to the UvrC family.</text>
</comment>
<name>UVRC_HYDCU</name>
<gene>
    <name evidence="1" type="primary">uvrC</name>
    <name type="ordered locus">Tcr_1145</name>
</gene>